<sequence>MSGSSSVHSGTAASEEWGMPSVGEIGAAGEAVETNEVERAQHQERQRKHIATSDNDEEESGNKWSVSTLPITSYGGDGDAAGGSGRRQALEAKMERLLKKPKARHSRQDEEDLEQYLDEKILRLKDEMNMAAQKDIETLNRRLETGDNRLIAMEKVTLLPKVISVLNKANLADTILDNNLLQSVRIWLEPLPDGSLPSFEIQKSLFAAIENLPIKTEHLKESGLGKVVIFYTKSKRVEHKLARLADRLVAEWTRPIIGASDNYRDKRVLKMDFDVEKHRKKAALDSAKSKKRRKAAVDEEKHKSLYELAAAKRNRAAAPAQTTTDYKYAPVSNISNVQTGIRTAGVGSTLNNNDLYKRLNSRLAKSKRSK</sequence>
<comment type="function">
    <text evidence="1">Transcription factor involved in RNA polymerase II transcription regulation. May function in both SPT15/TBP post-recruitment and recruitment steps of transcription (By similarity).</text>
</comment>
<comment type="subcellular location">
    <subcellularLocation>
        <location evidence="2">Nucleus</location>
    </subcellularLocation>
</comment>
<comment type="similarity">
    <text evidence="4">Belongs to the IWS1 family.</text>
</comment>
<protein>
    <recommendedName>
        <fullName>Transcription factor IWS1</fullName>
    </recommendedName>
</protein>
<proteinExistence type="inferred from homology"/>
<feature type="chain" id="PRO_0000083353" description="Transcription factor IWS1">
    <location>
        <begin position="1"/>
        <end position="370"/>
    </location>
</feature>
<feature type="domain" description="TFIIS N-terminal" evidence="2">
    <location>
        <begin position="182"/>
        <end position="259"/>
    </location>
</feature>
<feature type="region of interest" description="Disordered" evidence="3">
    <location>
        <begin position="1"/>
        <end position="86"/>
    </location>
</feature>
<feature type="compositionally biased region" description="Polar residues" evidence="3">
    <location>
        <begin position="1"/>
        <end position="12"/>
    </location>
</feature>
<feature type="compositionally biased region" description="Polar residues" evidence="3">
    <location>
        <begin position="62"/>
        <end position="71"/>
    </location>
</feature>
<feature type="compositionally biased region" description="Gly residues" evidence="3">
    <location>
        <begin position="75"/>
        <end position="85"/>
    </location>
</feature>
<organism>
    <name type="scientific">Eremothecium gossypii (strain ATCC 10895 / CBS 109.51 / FGSC 9923 / NRRL Y-1056)</name>
    <name type="common">Yeast</name>
    <name type="synonym">Ashbya gossypii</name>
    <dbReference type="NCBI Taxonomy" id="284811"/>
    <lineage>
        <taxon>Eukaryota</taxon>
        <taxon>Fungi</taxon>
        <taxon>Dikarya</taxon>
        <taxon>Ascomycota</taxon>
        <taxon>Saccharomycotina</taxon>
        <taxon>Saccharomycetes</taxon>
        <taxon>Saccharomycetales</taxon>
        <taxon>Saccharomycetaceae</taxon>
        <taxon>Eremothecium</taxon>
    </lineage>
</organism>
<keyword id="KW-0539">Nucleus</keyword>
<keyword id="KW-1185">Reference proteome</keyword>
<keyword id="KW-0804">Transcription</keyword>
<keyword id="KW-0805">Transcription regulation</keyword>
<evidence type="ECO:0000250" key="1"/>
<evidence type="ECO:0000255" key="2">
    <source>
        <dbReference type="PROSITE-ProRule" id="PRU00649"/>
    </source>
</evidence>
<evidence type="ECO:0000256" key="3">
    <source>
        <dbReference type="SAM" id="MobiDB-lite"/>
    </source>
</evidence>
<evidence type="ECO:0000305" key="4"/>
<dbReference type="EMBL" id="AE016814">
    <property type="protein sequence ID" value="AAS50472.1"/>
    <property type="molecule type" value="Genomic_DNA"/>
</dbReference>
<dbReference type="RefSeq" id="NP_982648.1">
    <property type="nucleotide sequence ID" value="NM_208001.1"/>
</dbReference>
<dbReference type="SMR" id="Q75EH2"/>
<dbReference type="FunCoup" id="Q75EH2">
    <property type="interactions" value="395"/>
</dbReference>
<dbReference type="STRING" id="284811.Q75EH2"/>
<dbReference type="EnsemblFungi" id="AAS50472">
    <property type="protein sequence ID" value="AAS50472"/>
    <property type="gene ID" value="AGOS_AAR107W"/>
</dbReference>
<dbReference type="GeneID" id="4618445"/>
<dbReference type="KEGG" id="ago:AGOS_AAR107W"/>
<dbReference type="eggNOG" id="KOG1793">
    <property type="taxonomic scope" value="Eukaryota"/>
</dbReference>
<dbReference type="HOGENOM" id="CLU_045275_0_0_1"/>
<dbReference type="InParanoid" id="Q75EH2"/>
<dbReference type="OMA" id="TDYKFAP"/>
<dbReference type="OrthoDB" id="21124at2759"/>
<dbReference type="Proteomes" id="UP000000591">
    <property type="component" value="Chromosome I"/>
</dbReference>
<dbReference type="GO" id="GO:0005634">
    <property type="term" value="C:nucleus"/>
    <property type="evidence" value="ECO:0000318"/>
    <property type="project" value="GO_Central"/>
</dbReference>
<dbReference type="GO" id="GO:0005665">
    <property type="term" value="C:RNA polymerase II, core complex"/>
    <property type="evidence" value="ECO:0007669"/>
    <property type="project" value="EnsemblFungi"/>
</dbReference>
<dbReference type="GO" id="GO:0003682">
    <property type="term" value="F:chromatin binding"/>
    <property type="evidence" value="ECO:0007669"/>
    <property type="project" value="EnsemblFungi"/>
</dbReference>
<dbReference type="GO" id="GO:0000993">
    <property type="term" value="F:RNA polymerase II complex binding"/>
    <property type="evidence" value="ECO:0007669"/>
    <property type="project" value="EnsemblFungi"/>
</dbReference>
<dbReference type="GO" id="GO:0061629">
    <property type="term" value="F:RNA polymerase II-specific DNA-binding transcription factor binding"/>
    <property type="evidence" value="ECO:0007669"/>
    <property type="project" value="EnsemblFungi"/>
</dbReference>
<dbReference type="GO" id="GO:0006334">
    <property type="term" value="P:nucleosome assembly"/>
    <property type="evidence" value="ECO:0007669"/>
    <property type="project" value="EnsemblFungi"/>
</dbReference>
<dbReference type="GO" id="GO:0016973">
    <property type="term" value="P:poly(A)+ mRNA export from nucleus"/>
    <property type="evidence" value="ECO:0000318"/>
    <property type="project" value="GO_Central"/>
</dbReference>
<dbReference type="GO" id="GO:0006357">
    <property type="term" value="P:regulation of transcription by RNA polymerase II"/>
    <property type="evidence" value="ECO:0007669"/>
    <property type="project" value="EnsemblFungi"/>
</dbReference>
<dbReference type="GO" id="GO:0034243">
    <property type="term" value="P:regulation of transcription elongation by RNA polymerase II"/>
    <property type="evidence" value="ECO:0007669"/>
    <property type="project" value="EnsemblFungi"/>
</dbReference>
<dbReference type="Gene3D" id="1.20.5.170">
    <property type="match status" value="1"/>
</dbReference>
<dbReference type="Gene3D" id="1.20.930.10">
    <property type="entry name" value="Conserved domain common to transcription factors TFIIS, elongin A, CRSP70"/>
    <property type="match status" value="1"/>
</dbReference>
<dbReference type="InterPro" id="IPR051037">
    <property type="entry name" value="RNAPII_TF_IWS1"/>
</dbReference>
<dbReference type="InterPro" id="IPR035441">
    <property type="entry name" value="TFIIS/LEDGF_dom_sf"/>
</dbReference>
<dbReference type="InterPro" id="IPR017923">
    <property type="entry name" value="TFIIS_N"/>
</dbReference>
<dbReference type="PANTHER" id="PTHR46010">
    <property type="entry name" value="PROTEIN IWS1 HOMOLOG"/>
    <property type="match status" value="1"/>
</dbReference>
<dbReference type="PANTHER" id="PTHR46010:SF1">
    <property type="entry name" value="PROTEIN IWS1 HOMOLOG"/>
    <property type="match status" value="1"/>
</dbReference>
<dbReference type="Pfam" id="PF08711">
    <property type="entry name" value="Med26"/>
    <property type="match status" value="1"/>
</dbReference>
<dbReference type="PROSITE" id="PS51319">
    <property type="entry name" value="TFIIS_N"/>
    <property type="match status" value="1"/>
</dbReference>
<reference key="1">
    <citation type="journal article" date="2004" name="Science">
        <title>The Ashbya gossypii genome as a tool for mapping the ancient Saccharomyces cerevisiae genome.</title>
        <authorList>
            <person name="Dietrich F.S."/>
            <person name="Voegeli S."/>
            <person name="Brachat S."/>
            <person name="Lerch A."/>
            <person name="Gates K."/>
            <person name="Steiner S."/>
            <person name="Mohr C."/>
            <person name="Poehlmann R."/>
            <person name="Luedi P."/>
            <person name="Choi S."/>
            <person name="Wing R.A."/>
            <person name="Flavier A."/>
            <person name="Gaffney T.D."/>
            <person name="Philippsen P."/>
        </authorList>
    </citation>
    <scope>NUCLEOTIDE SEQUENCE [LARGE SCALE GENOMIC DNA]</scope>
    <source>
        <strain>ATCC 10895 / CBS 109.51 / FGSC 9923 / NRRL Y-1056</strain>
    </source>
</reference>
<reference key="2">
    <citation type="journal article" date="2013" name="G3 (Bethesda)">
        <title>Genomes of Ashbya fungi isolated from insects reveal four mating-type loci, numerous translocations, lack of transposons, and distinct gene duplications.</title>
        <authorList>
            <person name="Dietrich F.S."/>
            <person name="Voegeli S."/>
            <person name="Kuo S."/>
            <person name="Philippsen P."/>
        </authorList>
    </citation>
    <scope>GENOME REANNOTATION</scope>
    <source>
        <strain>ATCC 10895 / CBS 109.51 / FGSC 9923 / NRRL Y-1056</strain>
    </source>
</reference>
<name>IWS1_EREGS</name>
<accession>Q75EH2</accession>
<gene>
    <name type="primary">IWS1</name>
    <name type="ordered locus">AAR107W</name>
</gene>